<reference key="1">
    <citation type="journal article" date="2009" name="Genome Biol.">
        <title>Genomic and genetic analyses of diversity and plant interactions of Pseudomonas fluorescens.</title>
        <authorList>
            <person name="Silby M.W."/>
            <person name="Cerdeno-Tarraga A.M."/>
            <person name="Vernikos G.S."/>
            <person name="Giddens S.R."/>
            <person name="Jackson R.W."/>
            <person name="Preston G.M."/>
            <person name="Zhang X.-X."/>
            <person name="Moon C.D."/>
            <person name="Gehrig S.M."/>
            <person name="Godfrey S.A.C."/>
            <person name="Knight C.G."/>
            <person name="Malone J.G."/>
            <person name="Robinson Z."/>
            <person name="Spiers A.J."/>
            <person name="Harris S."/>
            <person name="Challis G.L."/>
            <person name="Yaxley A.M."/>
            <person name="Harris D."/>
            <person name="Seeger K."/>
            <person name="Murphy L."/>
            <person name="Rutter S."/>
            <person name="Squares R."/>
            <person name="Quail M.A."/>
            <person name="Saunders E."/>
            <person name="Mavromatis K."/>
            <person name="Brettin T.S."/>
            <person name="Bentley S.D."/>
            <person name="Hothersall J."/>
            <person name="Stephens E."/>
            <person name="Thomas C.M."/>
            <person name="Parkhill J."/>
            <person name="Levy S.B."/>
            <person name="Rainey P.B."/>
            <person name="Thomson N.R."/>
        </authorList>
    </citation>
    <scope>NUCLEOTIDE SEQUENCE [LARGE SCALE GENOMIC DNA]</scope>
    <source>
        <strain>Pf0-1</strain>
    </source>
</reference>
<feature type="chain" id="PRO_0000231835" description="Pyridoxine 5'-phosphate synthase">
    <location>
        <begin position="1"/>
        <end position="247"/>
    </location>
</feature>
<feature type="active site" description="Proton acceptor" evidence="1">
    <location>
        <position position="48"/>
    </location>
</feature>
<feature type="active site" description="Proton acceptor" evidence="1">
    <location>
        <position position="75"/>
    </location>
</feature>
<feature type="active site" description="Proton donor" evidence="1">
    <location>
        <position position="196"/>
    </location>
</feature>
<feature type="binding site" evidence="1">
    <location>
        <position position="12"/>
    </location>
    <ligand>
        <name>3-amino-2-oxopropyl phosphate</name>
        <dbReference type="ChEBI" id="CHEBI:57279"/>
    </ligand>
</feature>
<feature type="binding site" evidence="1">
    <location>
        <begin position="14"/>
        <end position="15"/>
    </location>
    <ligand>
        <name>1-deoxy-D-xylulose 5-phosphate</name>
        <dbReference type="ChEBI" id="CHEBI:57792"/>
    </ligand>
</feature>
<feature type="binding site" evidence="1">
    <location>
        <position position="23"/>
    </location>
    <ligand>
        <name>3-amino-2-oxopropyl phosphate</name>
        <dbReference type="ChEBI" id="CHEBI:57279"/>
    </ligand>
</feature>
<feature type="binding site" evidence="1">
    <location>
        <position position="50"/>
    </location>
    <ligand>
        <name>1-deoxy-D-xylulose 5-phosphate</name>
        <dbReference type="ChEBI" id="CHEBI:57792"/>
    </ligand>
</feature>
<feature type="binding site" evidence="1">
    <location>
        <position position="55"/>
    </location>
    <ligand>
        <name>1-deoxy-D-xylulose 5-phosphate</name>
        <dbReference type="ChEBI" id="CHEBI:57792"/>
    </ligand>
</feature>
<feature type="binding site" evidence="1">
    <location>
        <position position="105"/>
    </location>
    <ligand>
        <name>1-deoxy-D-xylulose 5-phosphate</name>
        <dbReference type="ChEBI" id="CHEBI:57792"/>
    </ligand>
</feature>
<feature type="binding site" evidence="1">
    <location>
        <position position="197"/>
    </location>
    <ligand>
        <name>3-amino-2-oxopropyl phosphate</name>
        <dbReference type="ChEBI" id="CHEBI:57279"/>
    </ligand>
</feature>
<feature type="binding site" evidence="1">
    <location>
        <begin position="218"/>
        <end position="219"/>
    </location>
    <ligand>
        <name>3-amino-2-oxopropyl phosphate</name>
        <dbReference type="ChEBI" id="CHEBI:57279"/>
    </ligand>
</feature>
<feature type="site" description="Transition state stabilizer" evidence="1">
    <location>
        <position position="156"/>
    </location>
</feature>
<dbReference type="EC" id="2.6.99.2" evidence="1"/>
<dbReference type="EMBL" id="CP000094">
    <property type="protein sequence ID" value="ABA72740.1"/>
    <property type="molecule type" value="Genomic_DNA"/>
</dbReference>
<dbReference type="RefSeq" id="WP_011332592.1">
    <property type="nucleotide sequence ID" value="NC_007492.2"/>
</dbReference>
<dbReference type="SMR" id="Q3KHL6"/>
<dbReference type="KEGG" id="pfo:Pfl01_0997"/>
<dbReference type="eggNOG" id="COG0854">
    <property type="taxonomic scope" value="Bacteria"/>
</dbReference>
<dbReference type="HOGENOM" id="CLU_074563_0_0_6"/>
<dbReference type="UniPathway" id="UPA00244">
    <property type="reaction ID" value="UER00313"/>
</dbReference>
<dbReference type="Proteomes" id="UP000002704">
    <property type="component" value="Chromosome"/>
</dbReference>
<dbReference type="GO" id="GO:0005829">
    <property type="term" value="C:cytosol"/>
    <property type="evidence" value="ECO:0007669"/>
    <property type="project" value="TreeGrafter"/>
</dbReference>
<dbReference type="GO" id="GO:0033856">
    <property type="term" value="F:pyridoxine 5'-phosphate synthase activity"/>
    <property type="evidence" value="ECO:0007669"/>
    <property type="project" value="UniProtKB-EC"/>
</dbReference>
<dbReference type="GO" id="GO:0008615">
    <property type="term" value="P:pyridoxine biosynthetic process"/>
    <property type="evidence" value="ECO:0007669"/>
    <property type="project" value="UniProtKB-UniRule"/>
</dbReference>
<dbReference type="CDD" id="cd00003">
    <property type="entry name" value="PNPsynthase"/>
    <property type="match status" value="1"/>
</dbReference>
<dbReference type="FunFam" id="3.20.20.70:FF:000042">
    <property type="entry name" value="Pyridoxine 5'-phosphate synthase"/>
    <property type="match status" value="1"/>
</dbReference>
<dbReference type="Gene3D" id="3.20.20.70">
    <property type="entry name" value="Aldolase class I"/>
    <property type="match status" value="1"/>
</dbReference>
<dbReference type="HAMAP" id="MF_00279">
    <property type="entry name" value="PdxJ"/>
    <property type="match status" value="1"/>
</dbReference>
<dbReference type="InterPro" id="IPR013785">
    <property type="entry name" value="Aldolase_TIM"/>
</dbReference>
<dbReference type="InterPro" id="IPR004569">
    <property type="entry name" value="PyrdxlP_synth_PdxJ"/>
</dbReference>
<dbReference type="InterPro" id="IPR036130">
    <property type="entry name" value="Pyridoxine-5'_phos_synth"/>
</dbReference>
<dbReference type="NCBIfam" id="TIGR00559">
    <property type="entry name" value="pdxJ"/>
    <property type="match status" value="1"/>
</dbReference>
<dbReference type="NCBIfam" id="NF003623">
    <property type="entry name" value="PRK05265.1-1"/>
    <property type="match status" value="1"/>
</dbReference>
<dbReference type="NCBIfam" id="NF003625">
    <property type="entry name" value="PRK05265.1-3"/>
    <property type="match status" value="1"/>
</dbReference>
<dbReference type="NCBIfam" id="NF003627">
    <property type="entry name" value="PRK05265.1-5"/>
    <property type="match status" value="1"/>
</dbReference>
<dbReference type="PANTHER" id="PTHR30456">
    <property type="entry name" value="PYRIDOXINE 5'-PHOSPHATE SYNTHASE"/>
    <property type="match status" value="1"/>
</dbReference>
<dbReference type="PANTHER" id="PTHR30456:SF0">
    <property type="entry name" value="PYRIDOXINE 5'-PHOSPHATE SYNTHASE"/>
    <property type="match status" value="1"/>
</dbReference>
<dbReference type="Pfam" id="PF03740">
    <property type="entry name" value="PdxJ"/>
    <property type="match status" value="1"/>
</dbReference>
<dbReference type="SUPFAM" id="SSF63892">
    <property type="entry name" value="Pyridoxine 5'-phosphate synthase"/>
    <property type="match status" value="1"/>
</dbReference>
<proteinExistence type="inferred from homology"/>
<organism>
    <name type="scientific">Pseudomonas fluorescens (strain Pf0-1)</name>
    <dbReference type="NCBI Taxonomy" id="205922"/>
    <lineage>
        <taxon>Bacteria</taxon>
        <taxon>Pseudomonadati</taxon>
        <taxon>Pseudomonadota</taxon>
        <taxon>Gammaproteobacteria</taxon>
        <taxon>Pseudomonadales</taxon>
        <taxon>Pseudomonadaceae</taxon>
        <taxon>Pseudomonas</taxon>
    </lineage>
</organism>
<protein>
    <recommendedName>
        <fullName evidence="1">Pyridoxine 5'-phosphate synthase</fullName>
        <shortName evidence="1">PNP synthase</shortName>
        <ecNumber evidence="1">2.6.99.2</ecNumber>
    </recommendedName>
</protein>
<sequence length="247" mass="26900">MTISNRILLGVNIDHVATLRQARGTRYPDPVKAALDAEEAGADGITVHLREDRRHIQERDVLLLKDVLQTRMNFEMGVTEEMMAFAERIRPAHICLVPETRQELTTEGGLDVAGQEERIRAAVERLSKIGSEVSLFIDADERQIAASKRVGAPAIELHTGRYADAETPSEVAEELKRVADGVAFGLAQGLIVNAGHGLHYHNVEAVAAIKGINELNIGHALVAHALFVGFKSAVSEMKTLILAAARH</sequence>
<comment type="function">
    <text evidence="1">Catalyzes the complicated ring closure reaction between the two acyclic compounds 1-deoxy-D-xylulose-5-phosphate (DXP) and 3-amino-2-oxopropyl phosphate (1-amino-acetone-3-phosphate or AAP) to form pyridoxine 5'-phosphate (PNP) and inorganic phosphate.</text>
</comment>
<comment type="catalytic activity">
    <reaction evidence="1">
        <text>3-amino-2-oxopropyl phosphate + 1-deoxy-D-xylulose 5-phosphate = pyridoxine 5'-phosphate + phosphate + 2 H2O + H(+)</text>
        <dbReference type="Rhea" id="RHEA:15265"/>
        <dbReference type="ChEBI" id="CHEBI:15377"/>
        <dbReference type="ChEBI" id="CHEBI:15378"/>
        <dbReference type="ChEBI" id="CHEBI:43474"/>
        <dbReference type="ChEBI" id="CHEBI:57279"/>
        <dbReference type="ChEBI" id="CHEBI:57792"/>
        <dbReference type="ChEBI" id="CHEBI:58589"/>
        <dbReference type="EC" id="2.6.99.2"/>
    </reaction>
</comment>
<comment type="pathway">
    <text evidence="1">Cofactor biosynthesis; pyridoxine 5'-phosphate biosynthesis; pyridoxine 5'-phosphate from D-erythrose 4-phosphate: step 5/5.</text>
</comment>
<comment type="subunit">
    <text evidence="1">Homooctamer; tetramer of dimers.</text>
</comment>
<comment type="subcellular location">
    <subcellularLocation>
        <location evidence="1">Cytoplasm</location>
    </subcellularLocation>
</comment>
<comment type="similarity">
    <text evidence="1">Belongs to the PNP synthase family.</text>
</comment>
<gene>
    <name evidence="1" type="primary">pdxJ</name>
    <name type="ordered locus">Pfl01_0997</name>
</gene>
<accession>Q3KHL6</accession>
<keyword id="KW-0963">Cytoplasm</keyword>
<keyword id="KW-0664">Pyridoxine biosynthesis</keyword>
<keyword id="KW-0808">Transferase</keyword>
<evidence type="ECO:0000255" key="1">
    <source>
        <dbReference type="HAMAP-Rule" id="MF_00279"/>
    </source>
</evidence>
<name>PDXJ_PSEPF</name>